<keyword id="KW-0004">4Fe-4S</keyword>
<keyword id="KW-0963">Cytoplasm</keyword>
<keyword id="KW-1015">Disulfide bond</keyword>
<keyword id="KW-0408">Iron</keyword>
<keyword id="KW-0411">Iron-sulfur</keyword>
<keyword id="KW-0479">Metal-binding</keyword>
<keyword id="KW-0489">Methyltransferase</keyword>
<keyword id="KW-1185">Reference proteome</keyword>
<keyword id="KW-0698">rRNA processing</keyword>
<keyword id="KW-0949">S-adenosyl-L-methionine</keyword>
<keyword id="KW-0808">Transferase</keyword>
<keyword id="KW-0819">tRNA processing</keyword>
<sequence>MPLHRVEALGEPQDRTGKTFSGRTNGPISSPLTDTERRMSIPQNPAPVNLVGLSREEIAALLRDMGEKPFRAKQLWHWVYHRGETDFSAMTTLGTPLRAKLAETCVVARPHVVREQRSEDGTRKWLLRFPDGNEAETVYIPEDDRGALCVSSQVGCTLTCRFCHTGTQLLVRNLTAHEIVGQFMAARDAYGEWPSPTDESRQLSNIVLMGMGEPLYNYDNVAKAIGILLDNEGIAVSRRRITLSTSGVVPMIRRCGAELGVNLAVSLHAARDEIRDEIMPINRKYPLAELMAACREYPGASNARRITFEYVMLKGVNDSEADARALIKLVEGVPCKFNLIPFNPWPGSGFECPPIRHIERFANILFEAGYTAPIRMPRGRDILAACGQLRSDSLRERASLHKARLAAGVADDHAPAAAPLADTPGAVA</sequence>
<dbReference type="EC" id="2.1.1.192" evidence="1"/>
<dbReference type="EMBL" id="CP000230">
    <property type="protein sequence ID" value="ABC24123.1"/>
    <property type="molecule type" value="Genomic_DNA"/>
</dbReference>
<dbReference type="RefSeq" id="YP_428410.1">
    <property type="nucleotide sequence ID" value="NC_007643.1"/>
</dbReference>
<dbReference type="SMR" id="Q2RP22"/>
<dbReference type="STRING" id="269796.Rru_A3329"/>
<dbReference type="EnsemblBacteria" id="ABC24123">
    <property type="protein sequence ID" value="ABC24123"/>
    <property type="gene ID" value="Rru_A3329"/>
</dbReference>
<dbReference type="KEGG" id="rru:Rru_A3329"/>
<dbReference type="PATRIC" id="fig|269796.9.peg.3443"/>
<dbReference type="eggNOG" id="COG0820">
    <property type="taxonomic scope" value="Bacteria"/>
</dbReference>
<dbReference type="HOGENOM" id="CLU_029101_0_0_5"/>
<dbReference type="PhylomeDB" id="Q2RP22"/>
<dbReference type="Proteomes" id="UP000001929">
    <property type="component" value="Chromosome"/>
</dbReference>
<dbReference type="GO" id="GO:0005737">
    <property type="term" value="C:cytoplasm"/>
    <property type="evidence" value="ECO:0007669"/>
    <property type="project" value="UniProtKB-SubCell"/>
</dbReference>
<dbReference type="GO" id="GO:0051539">
    <property type="term" value="F:4 iron, 4 sulfur cluster binding"/>
    <property type="evidence" value="ECO:0007669"/>
    <property type="project" value="UniProtKB-UniRule"/>
</dbReference>
<dbReference type="GO" id="GO:0046872">
    <property type="term" value="F:metal ion binding"/>
    <property type="evidence" value="ECO:0007669"/>
    <property type="project" value="UniProtKB-KW"/>
</dbReference>
<dbReference type="GO" id="GO:0070040">
    <property type="term" value="F:rRNA (adenine(2503)-C2-)-methyltransferase activity"/>
    <property type="evidence" value="ECO:0007669"/>
    <property type="project" value="UniProtKB-UniRule"/>
</dbReference>
<dbReference type="GO" id="GO:0019843">
    <property type="term" value="F:rRNA binding"/>
    <property type="evidence" value="ECO:0007669"/>
    <property type="project" value="UniProtKB-UniRule"/>
</dbReference>
<dbReference type="GO" id="GO:0002935">
    <property type="term" value="F:tRNA (adenine(37)-C2)-methyltransferase activity"/>
    <property type="evidence" value="ECO:0007669"/>
    <property type="project" value="UniProtKB-UniRule"/>
</dbReference>
<dbReference type="GO" id="GO:0000049">
    <property type="term" value="F:tRNA binding"/>
    <property type="evidence" value="ECO:0007669"/>
    <property type="project" value="UniProtKB-UniRule"/>
</dbReference>
<dbReference type="GO" id="GO:0070475">
    <property type="term" value="P:rRNA base methylation"/>
    <property type="evidence" value="ECO:0007669"/>
    <property type="project" value="UniProtKB-UniRule"/>
</dbReference>
<dbReference type="GO" id="GO:0030488">
    <property type="term" value="P:tRNA methylation"/>
    <property type="evidence" value="ECO:0007669"/>
    <property type="project" value="UniProtKB-UniRule"/>
</dbReference>
<dbReference type="CDD" id="cd01335">
    <property type="entry name" value="Radical_SAM"/>
    <property type="match status" value="1"/>
</dbReference>
<dbReference type="FunFam" id="3.20.20.70:FF:000008">
    <property type="entry name" value="Dual-specificity RNA methyltransferase RlmN"/>
    <property type="match status" value="1"/>
</dbReference>
<dbReference type="Gene3D" id="1.10.150.530">
    <property type="match status" value="1"/>
</dbReference>
<dbReference type="Gene3D" id="3.20.20.70">
    <property type="entry name" value="Aldolase class I"/>
    <property type="match status" value="1"/>
</dbReference>
<dbReference type="HAMAP" id="MF_01849">
    <property type="entry name" value="RNA_methyltr_RlmN"/>
    <property type="match status" value="1"/>
</dbReference>
<dbReference type="InterPro" id="IPR013785">
    <property type="entry name" value="Aldolase_TIM"/>
</dbReference>
<dbReference type="InterPro" id="IPR040072">
    <property type="entry name" value="Methyltransferase_A"/>
</dbReference>
<dbReference type="InterPro" id="IPR048641">
    <property type="entry name" value="RlmN_N"/>
</dbReference>
<dbReference type="InterPro" id="IPR027492">
    <property type="entry name" value="RNA_MTrfase_RlmN"/>
</dbReference>
<dbReference type="InterPro" id="IPR004383">
    <property type="entry name" value="rRNA_lsu_MTrfase_RlmN/Cfr"/>
</dbReference>
<dbReference type="InterPro" id="IPR007197">
    <property type="entry name" value="rSAM"/>
</dbReference>
<dbReference type="NCBIfam" id="TIGR00048">
    <property type="entry name" value="rRNA_mod_RlmN"/>
    <property type="match status" value="1"/>
</dbReference>
<dbReference type="PANTHER" id="PTHR30544">
    <property type="entry name" value="23S RRNA METHYLTRANSFERASE"/>
    <property type="match status" value="1"/>
</dbReference>
<dbReference type="PANTHER" id="PTHR30544:SF5">
    <property type="entry name" value="RADICAL SAM CORE DOMAIN-CONTAINING PROTEIN"/>
    <property type="match status" value="1"/>
</dbReference>
<dbReference type="Pfam" id="PF04055">
    <property type="entry name" value="Radical_SAM"/>
    <property type="match status" value="1"/>
</dbReference>
<dbReference type="Pfam" id="PF21016">
    <property type="entry name" value="RlmN_N"/>
    <property type="match status" value="1"/>
</dbReference>
<dbReference type="PIRSF" id="PIRSF006004">
    <property type="entry name" value="CHP00048"/>
    <property type="match status" value="1"/>
</dbReference>
<dbReference type="SFLD" id="SFLDF00275">
    <property type="entry name" value="adenosine_C2_methyltransferase"/>
    <property type="match status" value="1"/>
</dbReference>
<dbReference type="SFLD" id="SFLDG01062">
    <property type="entry name" value="methyltransferase_(Class_A)"/>
    <property type="match status" value="1"/>
</dbReference>
<dbReference type="SUPFAM" id="SSF102114">
    <property type="entry name" value="Radical SAM enzymes"/>
    <property type="match status" value="1"/>
</dbReference>
<dbReference type="PROSITE" id="PS51918">
    <property type="entry name" value="RADICAL_SAM"/>
    <property type="match status" value="1"/>
</dbReference>
<reference key="1">
    <citation type="journal article" date="2011" name="Stand. Genomic Sci.">
        <title>Complete genome sequence of Rhodospirillum rubrum type strain (S1).</title>
        <authorList>
            <person name="Munk A.C."/>
            <person name="Copeland A."/>
            <person name="Lucas S."/>
            <person name="Lapidus A."/>
            <person name="Del Rio T.G."/>
            <person name="Barry K."/>
            <person name="Detter J.C."/>
            <person name="Hammon N."/>
            <person name="Israni S."/>
            <person name="Pitluck S."/>
            <person name="Brettin T."/>
            <person name="Bruce D."/>
            <person name="Han C."/>
            <person name="Tapia R."/>
            <person name="Gilna P."/>
            <person name="Schmutz J."/>
            <person name="Larimer F."/>
            <person name="Land M."/>
            <person name="Kyrpides N.C."/>
            <person name="Mavromatis K."/>
            <person name="Richardson P."/>
            <person name="Rohde M."/>
            <person name="Goeker M."/>
            <person name="Klenk H.P."/>
            <person name="Zhang Y."/>
            <person name="Roberts G.P."/>
            <person name="Reslewic S."/>
            <person name="Schwartz D.C."/>
        </authorList>
    </citation>
    <scope>NUCLEOTIDE SEQUENCE [LARGE SCALE GENOMIC DNA]</scope>
    <source>
        <strain>ATCC 11170 / ATH 1.1.1 / DSM 467 / LMG 4362 / NCIMB 8255 / S1</strain>
    </source>
</reference>
<name>RLMN_RHORT</name>
<proteinExistence type="inferred from homology"/>
<evidence type="ECO:0000255" key="1">
    <source>
        <dbReference type="HAMAP-Rule" id="MF_01849"/>
    </source>
</evidence>
<evidence type="ECO:0000255" key="2">
    <source>
        <dbReference type="PROSITE-ProRule" id="PRU01266"/>
    </source>
</evidence>
<evidence type="ECO:0000256" key="3">
    <source>
        <dbReference type="SAM" id="MobiDB-lite"/>
    </source>
</evidence>
<protein>
    <recommendedName>
        <fullName evidence="1">Dual-specificity RNA methyltransferase RlmN</fullName>
        <ecNumber evidence="1">2.1.1.192</ecNumber>
    </recommendedName>
    <alternativeName>
        <fullName evidence="1">23S rRNA (adenine(2503)-C(2))-methyltransferase</fullName>
    </alternativeName>
    <alternativeName>
        <fullName evidence="1">23S rRNA m2A2503 methyltransferase</fullName>
    </alternativeName>
    <alternativeName>
        <fullName evidence="1">Ribosomal RNA large subunit methyltransferase N</fullName>
    </alternativeName>
    <alternativeName>
        <fullName evidence="1">tRNA (adenine(37)-C(2))-methyltransferase</fullName>
    </alternativeName>
    <alternativeName>
        <fullName evidence="1">tRNA m2A37 methyltransferase</fullName>
    </alternativeName>
</protein>
<accession>Q2RP22</accession>
<feature type="chain" id="PRO_0000350374" description="Dual-specificity RNA methyltransferase RlmN">
    <location>
        <begin position="1"/>
        <end position="428"/>
    </location>
</feature>
<feature type="domain" description="Radical SAM core" evidence="2">
    <location>
        <begin position="142"/>
        <end position="381"/>
    </location>
</feature>
<feature type="region of interest" description="Disordered" evidence="3">
    <location>
        <begin position="1"/>
        <end position="44"/>
    </location>
</feature>
<feature type="compositionally biased region" description="Basic and acidic residues" evidence="3">
    <location>
        <begin position="1"/>
        <end position="17"/>
    </location>
</feature>
<feature type="compositionally biased region" description="Polar residues" evidence="3">
    <location>
        <begin position="18"/>
        <end position="33"/>
    </location>
</feature>
<feature type="active site" description="Proton acceptor" evidence="1">
    <location>
        <position position="136"/>
    </location>
</feature>
<feature type="active site" description="S-methylcysteine intermediate" evidence="1">
    <location>
        <position position="386"/>
    </location>
</feature>
<feature type="binding site" evidence="1">
    <location>
        <position position="156"/>
    </location>
    <ligand>
        <name>[4Fe-4S] cluster</name>
        <dbReference type="ChEBI" id="CHEBI:49883"/>
        <note>4Fe-4S-S-AdoMet</note>
    </ligand>
</feature>
<feature type="binding site" evidence="1">
    <location>
        <position position="160"/>
    </location>
    <ligand>
        <name>[4Fe-4S] cluster</name>
        <dbReference type="ChEBI" id="CHEBI:49883"/>
        <note>4Fe-4S-S-AdoMet</note>
    </ligand>
</feature>
<feature type="binding site" evidence="1">
    <location>
        <position position="163"/>
    </location>
    <ligand>
        <name>[4Fe-4S] cluster</name>
        <dbReference type="ChEBI" id="CHEBI:49883"/>
        <note>4Fe-4S-S-AdoMet</note>
    </ligand>
</feature>
<feature type="binding site" evidence="1">
    <location>
        <begin position="212"/>
        <end position="213"/>
    </location>
    <ligand>
        <name>S-adenosyl-L-methionine</name>
        <dbReference type="ChEBI" id="CHEBI:59789"/>
    </ligand>
</feature>
<feature type="binding site" evidence="1">
    <location>
        <position position="244"/>
    </location>
    <ligand>
        <name>S-adenosyl-L-methionine</name>
        <dbReference type="ChEBI" id="CHEBI:59789"/>
    </ligand>
</feature>
<feature type="binding site" evidence="1">
    <location>
        <begin position="266"/>
        <end position="268"/>
    </location>
    <ligand>
        <name>S-adenosyl-L-methionine</name>
        <dbReference type="ChEBI" id="CHEBI:59789"/>
    </ligand>
</feature>
<feature type="binding site" evidence="1">
    <location>
        <position position="343"/>
    </location>
    <ligand>
        <name>S-adenosyl-L-methionine</name>
        <dbReference type="ChEBI" id="CHEBI:59789"/>
    </ligand>
</feature>
<feature type="disulfide bond" description="(transient)" evidence="1">
    <location>
        <begin position="149"/>
        <end position="386"/>
    </location>
</feature>
<comment type="function">
    <text evidence="1">Specifically methylates position 2 of adenine 2503 in 23S rRNA and position 2 of adenine 37 in tRNAs. m2A2503 modification seems to play a crucial role in the proofreading step occurring at the peptidyl transferase center and thus would serve to optimize ribosomal fidelity.</text>
</comment>
<comment type="catalytic activity">
    <reaction evidence="1">
        <text>adenosine(2503) in 23S rRNA + 2 reduced [2Fe-2S]-[ferredoxin] + 2 S-adenosyl-L-methionine = 2-methyladenosine(2503) in 23S rRNA + 5'-deoxyadenosine + L-methionine + 2 oxidized [2Fe-2S]-[ferredoxin] + S-adenosyl-L-homocysteine</text>
        <dbReference type="Rhea" id="RHEA:42916"/>
        <dbReference type="Rhea" id="RHEA-COMP:10000"/>
        <dbReference type="Rhea" id="RHEA-COMP:10001"/>
        <dbReference type="Rhea" id="RHEA-COMP:10152"/>
        <dbReference type="Rhea" id="RHEA-COMP:10282"/>
        <dbReference type="ChEBI" id="CHEBI:17319"/>
        <dbReference type="ChEBI" id="CHEBI:33737"/>
        <dbReference type="ChEBI" id="CHEBI:33738"/>
        <dbReference type="ChEBI" id="CHEBI:57844"/>
        <dbReference type="ChEBI" id="CHEBI:57856"/>
        <dbReference type="ChEBI" id="CHEBI:59789"/>
        <dbReference type="ChEBI" id="CHEBI:74411"/>
        <dbReference type="ChEBI" id="CHEBI:74497"/>
        <dbReference type="EC" id="2.1.1.192"/>
    </reaction>
</comment>
<comment type="catalytic activity">
    <reaction evidence="1">
        <text>adenosine(37) in tRNA + 2 reduced [2Fe-2S]-[ferredoxin] + 2 S-adenosyl-L-methionine = 2-methyladenosine(37) in tRNA + 5'-deoxyadenosine + L-methionine + 2 oxidized [2Fe-2S]-[ferredoxin] + S-adenosyl-L-homocysteine</text>
        <dbReference type="Rhea" id="RHEA:43332"/>
        <dbReference type="Rhea" id="RHEA-COMP:10000"/>
        <dbReference type="Rhea" id="RHEA-COMP:10001"/>
        <dbReference type="Rhea" id="RHEA-COMP:10162"/>
        <dbReference type="Rhea" id="RHEA-COMP:10485"/>
        <dbReference type="ChEBI" id="CHEBI:17319"/>
        <dbReference type="ChEBI" id="CHEBI:33737"/>
        <dbReference type="ChEBI" id="CHEBI:33738"/>
        <dbReference type="ChEBI" id="CHEBI:57844"/>
        <dbReference type="ChEBI" id="CHEBI:57856"/>
        <dbReference type="ChEBI" id="CHEBI:59789"/>
        <dbReference type="ChEBI" id="CHEBI:74411"/>
        <dbReference type="ChEBI" id="CHEBI:74497"/>
        <dbReference type="EC" id="2.1.1.192"/>
    </reaction>
</comment>
<comment type="cofactor">
    <cofactor evidence="1">
        <name>[4Fe-4S] cluster</name>
        <dbReference type="ChEBI" id="CHEBI:49883"/>
    </cofactor>
    <text evidence="1">Binds 1 [4Fe-4S] cluster. The cluster is coordinated with 3 cysteines and an exchangeable S-adenosyl-L-methionine.</text>
</comment>
<comment type="subcellular location">
    <subcellularLocation>
        <location evidence="1">Cytoplasm</location>
    </subcellularLocation>
</comment>
<comment type="miscellaneous">
    <text evidence="1">Reaction proceeds by a ping-pong mechanism involving intermediate methylation of a conserved cysteine residue.</text>
</comment>
<comment type="similarity">
    <text evidence="1">Belongs to the radical SAM superfamily. RlmN family.</text>
</comment>
<organism>
    <name type="scientific">Rhodospirillum rubrum (strain ATCC 11170 / ATH 1.1.1 / DSM 467 / LMG 4362 / NCIMB 8255 / S1)</name>
    <dbReference type="NCBI Taxonomy" id="269796"/>
    <lineage>
        <taxon>Bacteria</taxon>
        <taxon>Pseudomonadati</taxon>
        <taxon>Pseudomonadota</taxon>
        <taxon>Alphaproteobacteria</taxon>
        <taxon>Rhodospirillales</taxon>
        <taxon>Rhodospirillaceae</taxon>
        <taxon>Rhodospirillum</taxon>
    </lineage>
</organism>
<gene>
    <name evidence="1" type="primary">rlmN</name>
    <name type="ordered locus">Rru_A3329</name>
</gene>